<reference key="1">
    <citation type="journal article" date="2006" name="Science">
        <title>The genome of black cottonwood, Populus trichocarpa (Torr. &amp; Gray).</title>
        <authorList>
            <person name="Tuskan G.A."/>
            <person name="Difazio S."/>
            <person name="Jansson S."/>
            <person name="Bohlmann J."/>
            <person name="Grigoriev I."/>
            <person name="Hellsten U."/>
            <person name="Putnam N."/>
            <person name="Ralph S."/>
            <person name="Rombauts S."/>
            <person name="Salamov A."/>
            <person name="Schein J."/>
            <person name="Sterck L."/>
            <person name="Aerts A."/>
            <person name="Bhalerao R.R."/>
            <person name="Bhalerao R.P."/>
            <person name="Blaudez D."/>
            <person name="Boerjan W."/>
            <person name="Brun A."/>
            <person name="Brunner A."/>
            <person name="Busov V."/>
            <person name="Campbell M."/>
            <person name="Carlson J."/>
            <person name="Chalot M."/>
            <person name="Chapman J."/>
            <person name="Chen G.-L."/>
            <person name="Cooper D."/>
            <person name="Coutinho P.M."/>
            <person name="Couturier J."/>
            <person name="Covert S."/>
            <person name="Cronk Q."/>
            <person name="Cunningham R."/>
            <person name="Davis J."/>
            <person name="Degroeve S."/>
            <person name="Dejardin A."/>
            <person name="dePamphilis C.W."/>
            <person name="Detter J."/>
            <person name="Dirks B."/>
            <person name="Dubchak I."/>
            <person name="Duplessis S."/>
            <person name="Ehlting J."/>
            <person name="Ellis B."/>
            <person name="Gendler K."/>
            <person name="Goodstein D."/>
            <person name="Gribskov M."/>
            <person name="Grimwood J."/>
            <person name="Groover A."/>
            <person name="Gunter L."/>
            <person name="Hamberger B."/>
            <person name="Heinze B."/>
            <person name="Helariutta Y."/>
            <person name="Henrissat B."/>
            <person name="Holligan D."/>
            <person name="Holt R."/>
            <person name="Huang W."/>
            <person name="Islam-Faridi N."/>
            <person name="Jones S."/>
            <person name="Jones-Rhoades M."/>
            <person name="Jorgensen R."/>
            <person name="Joshi C."/>
            <person name="Kangasjaervi J."/>
            <person name="Karlsson J."/>
            <person name="Kelleher C."/>
            <person name="Kirkpatrick R."/>
            <person name="Kirst M."/>
            <person name="Kohler A."/>
            <person name="Kalluri U."/>
            <person name="Larimer F."/>
            <person name="Leebens-Mack J."/>
            <person name="Leple J.-C."/>
            <person name="Locascio P."/>
            <person name="Lou Y."/>
            <person name="Lucas S."/>
            <person name="Martin F."/>
            <person name="Montanini B."/>
            <person name="Napoli C."/>
            <person name="Nelson D.R."/>
            <person name="Nelson C."/>
            <person name="Nieminen K."/>
            <person name="Nilsson O."/>
            <person name="Pereda V."/>
            <person name="Peter G."/>
            <person name="Philippe R."/>
            <person name="Pilate G."/>
            <person name="Poliakov A."/>
            <person name="Razumovskaya J."/>
            <person name="Richardson P."/>
            <person name="Rinaldi C."/>
            <person name="Ritland K."/>
            <person name="Rouze P."/>
            <person name="Ryaboy D."/>
            <person name="Schmutz J."/>
            <person name="Schrader J."/>
            <person name="Segerman B."/>
            <person name="Shin H."/>
            <person name="Siddiqui A."/>
            <person name="Sterky F."/>
            <person name="Terry A."/>
            <person name="Tsai C.-J."/>
            <person name="Uberbacher E."/>
            <person name="Unneberg P."/>
            <person name="Vahala J."/>
            <person name="Wall K."/>
            <person name="Wessler S."/>
            <person name="Yang G."/>
            <person name="Yin T."/>
            <person name="Douglas C."/>
            <person name="Marra M."/>
            <person name="Sandberg G."/>
            <person name="Van de Peer Y."/>
            <person name="Rokhsar D.S."/>
        </authorList>
    </citation>
    <scope>NUCLEOTIDE SEQUENCE [LARGE SCALE GENOMIC DNA]</scope>
    <source>
        <strain>cv. Nisqually</strain>
    </source>
</reference>
<organism>
    <name type="scientific">Populus trichocarpa</name>
    <name type="common">Western balsam poplar</name>
    <name type="synonym">Populus balsamifera subsp. trichocarpa</name>
    <dbReference type="NCBI Taxonomy" id="3694"/>
    <lineage>
        <taxon>Eukaryota</taxon>
        <taxon>Viridiplantae</taxon>
        <taxon>Streptophyta</taxon>
        <taxon>Embryophyta</taxon>
        <taxon>Tracheophyta</taxon>
        <taxon>Spermatophyta</taxon>
        <taxon>Magnoliopsida</taxon>
        <taxon>eudicotyledons</taxon>
        <taxon>Gunneridae</taxon>
        <taxon>Pentapetalae</taxon>
        <taxon>rosids</taxon>
        <taxon>fabids</taxon>
        <taxon>Malpighiales</taxon>
        <taxon>Salicaceae</taxon>
        <taxon>Saliceae</taxon>
        <taxon>Populus</taxon>
    </lineage>
</organism>
<dbReference type="EMBL" id="EF489041">
    <property type="protein sequence ID" value="ABO36718.1"/>
    <property type="molecule type" value="Genomic_DNA"/>
</dbReference>
<dbReference type="RefSeq" id="YP_001109515.1">
    <property type="nucleotide sequence ID" value="NC_009143.1"/>
</dbReference>
<dbReference type="SMR" id="A4GYS4"/>
<dbReference type="FunCoup" id="A4GYS4">
    <property type="interactions" value="449"/>
</dbReference>
<dbReference type="STRING" id="3694.A4GYS4"/>
<dbReference type="EnsemblPlants" id="Potri.013G162200.1.v4.1">
    <property type="protein sequence ID" value="Potri.013G162200.1.v4.1"/>
    <property type="gene ID" value="Potri.013G162200.v4.1"/>
</dbReference>
<dbReference type="GeneID" id="4929683"/>
<dbReference type="Gramene" id="Potri.013G162200.1.v4.1">
    <property type="protein sequence ID" value="Potri.013G162200.1.v4.1"/>
    <property type="gene ID" value="Potri.013G162200.v4.1"/>
</dbReference>
<dbReference type="KEGG" id="pop:4929683"/>
<dbReference type="InParanoid" id="A4GYS4"/>
<dbReference type="OMA" id="PFWAQQN"/>
<dbReference type="OrthoDB" id="811244at2759"/>
<dbReference type="Proteomes" id="UP000006729">
    <property type="component" value="Chloroplast"/>
</dbReference>
<dbReference type="ExpressionAtlas" id="A4GYS4">
    <property type="expression patterns" value="baseline"/>
</dbReference>
<dbReference type="GO" id="GO:0009535">
    <property type="term" value="C:chloroplast thylakoid membrane"/>
    <property type="evidence" value="ECO:0007669"/>
    <property type="project" value="UniProtKB-SubCell"/>
</dbReference>
<dbReference type="GO" id="GO:0009055">
    <property type="term" value="F:electron transfer activity"/>
    <property type="evidence" value="ECO:0007669"/>
    <property type="project" value="UniProtKB-UniRule"/>
</dbReference>
<dbReference type="GO" id="GO:0020037">
    <property type="term" value="F:heme binding"/>
    <property type="evidence" value="ECO:0007669"/>
    <property type="project" value="InterPro"/>
</dbReference>
<dbReference type="GO" id="GO:0005506">
    <property type="term" value="F:iron ion binding"/>
    <property type="evidence" value="ECO:0007669"/>
    <property type="project" value="InterPro"/>
</dbReference>
<dbReference type="GO" id="GO:0015979">
    <property type="term" value="P:photosynthesis"/>
    <property type="evidence" value="ECO:0007669"/>
    <property type="project" value="UniProtKB-UniRule"/>
</dbReference>
<dbReference type="FunFam" id="1.20.5.700:FF:000001">
    <property type="entry name" value="Cytochrome f"/>
    <property type="match status" value="1"/>
</dbReference>
<dbReference type="FunFam" id="2.40.50.100:FF:000007">
    <property type="entry name" value="Cytochrome f"/>
    <property type="match status" value="1"/>
</dbReference>
<dbReference type="FunFam" id="2.60.40.830:FF:000001">
    <property type="entry name" value="Cytochrome f"/>
    <property type="match status" value="1"/>
</dbReference>
<dbReference type="Gene3D" id="2.40.50.100">
    <property type="match status" value="1"/>
</dbReference>
<dbReference type="Gene3D" id="2.60.40.830">
    <property type="entry name" value="Cytochrome f large domain"/>
    <property type="match status" value="1"/>
</dbReference>
<dbReference type="Gene3D" id="1.20.5.700">
    <property type="entry name" value="Single helix bin"/>
    <property type="match status" value="1"/>
</dbReference>
<dbReference type="HAMAP" id="MF_00610">
    <property type="entry name" value="Cytb6_f_cytF"/>
    <property type="match status" value="1"/>
</dbReference>
<dbReference type="InterPro" id="IPR024058">
    <property type="entry name" value="Cyt-f_TM"/>
</dbReference>
<dbReference type="InterPro" id="IPR002325">
    <property type="entry name" value="Cyt_f"/>
</dbReference>
<dbReference type="InterPro" id="IPR024094">
    <property type="entry name" value="Cyt_f_lg_dom"/>
</dbReference>
<dbReference type="InterPro" id="IPR036826">
    <property type="entry name" value="Cyt_f_lg_dom_sf"/>
</dbReference>
<dbReference type="InterPro" id="IPR011054">
    <property type="entry name" value="Rudment_hybrid_motif"/>
</dbReference>
<dbReference type="PANTHER" id="PTHR33288">
    <property type="match status" value="1"/>
</dbReference>
<dbReference type="PANTHER" id="PTHR33288:SF10">
    <property type="entry name" value="CYTOCHROME F"/>
    <property type="match status" value="1"/>
</dbReference>
<dbReference type="Pfam" id="PF01333">
    <property type="entry name" value="Apocytochr_F_C"/>
    <property type="match status" value="1"/>
</dbReference>
<dbReference type="Pfam" id="PF16639">
    <property type="entry name" value="Apocytochr_F_N"/>
    <property type="match status" value="1"/>
</dbReference>
<dbReference type="PRINTS" id="PR00610">
    <property type="entry name" value="CYTOCHROMEF"/>
</dbReference>
<dbReference type="SUPFAM" id="SSF103431">
    <property type="entry name" value="Cytochrome f subunit of the cytochrome b6f complex, transmembrane anchor"/>
    <property type="match status" value="1"/>
</dbReference>
<dbReference type="SUPFAM" id="SSF49441">
    <property type="entry name" value="Cytochrome f, large domain"/>
    <property type="match status" value="1"/>
</dbReference>
<dbReference type="SUPFAM" id="SSF51246">
    <property type="entry name" value="Rudiment single hybrid motif"/>
    <property type="match status" value="1"/>
</dbReference>
<dbReference type="PROSITE" id="PS51010">
    <property type="entry name" value="CYTF"/>
    <property type="match status" value="1"/>
</dbReference>
<sequence>MQTRKTLSWIKEEITRSISVSLMIYIITGAYISNAYPIFAQQGYENPREATGRIVCANCHLANKPVGIEVPQAVLPDTVFEAVVRIPYDMQLKQVLANGKKGALNVGAVLILPEGFELAPPDRISPEMKEKIGNLSFQSYRPAKKNILVIGPVPGQKYSEITFPILSPDPAAKKDAHFLKYPIYVGGNRGRGQIYPDGSKSNNTVYNATAAGIVSKIIRKEKGGYEITITDAPEGRQVIDSIPPGPELLVSEGESIKLDQPLTSNPNVGGFGQGDAEIVLQDPLRVQGLLFFLASVILAQIFLVLKKKQFEKVQLSEMNF</sequence>
<evidence type="ECO:0000250" key="1"/>
<evidence type="ECO:0000255" key="2">
    <source>
        <dbReference type="HAMAP-Rule" id="MF_00610"/>
    </source>
</evidence>
<geneLocation type="chloroplast"/>
<keyword id="KW-0150">Chloroplast</keyword>
<keyword id="KW-0249">Electron transport</keyword>
<keyword id="KW-0349">Heme</keyword>
<keyword id="KW-0408">Iron</keyword>
<keyword id="KW-0472">Membrane</keyword>
<keyword id="KW-0479">Metal-binding</keyword>
<keyword id="KW-0602">Photosynthesis</keyword>
<keyword id="KW-0934">Plastid</keyword>
<keyword id="KW-1185">Reference proteome</keyword>
<keyword id="KW-0732">Signal</keyword>
<keyword id="KW-0793">Thylakoid</keyword>
<keyword id="KW-0812">Transmembrane</keyword>
<keyword id="KW-1133">Transmembrane helix</keyword>
<keyword id="KW-0813">Transport</keyword>
<proteinExistence type="inferred from homology"/>
<protein>
    <recommendedName>
        <fullName evidence="2">Cytochrome f</fullName>
    </recommendedName>
</protein>
<name>CYF_POPTR</name>
<feature type="signal peptide" evidence="2">
    <location>
        <begin position="1"/>
        <end position="35"/>
    </location>
</feature>
<feature type="chain" id="PRO_0000342082" description="Cytochrome f">
    <location>
        <begin position="36"/>
        <end position="320"/>
    </location>
</feature>
<feature type="transmembrane region" description="Helical" evidence="2">
    <location>
        <begin position="286"/>
        <end position="306"/>
    </location>
</feature>
<feature type="binding site" description="axial binding residue" evidence="2">
    <location>
        <position position="36"/>
    </location>
    <ligand>
        <name>heme</name>
        <dbReference type="ChEBI" id="CHEBI:30413"/>
    </ligand>
    <ligandPart>
        <name>Fe</name>
        <dbReference type="ChEBI" id="CHEBI:18248"/>
    </ligandPart>
</feature>
<feature type="binding site" description="covalent" evidence="2">
    <location>
        <position position="56"/>
    </location>
    <ligand>
        <name>heme</name>
        <dbReference type="ChEBI" id="CHEBI:30413"/>
    </ligand>
</feature>
<feature type="binding site" description="covalent" evidence="2">
    <location>
        <position position="59"/>
    </location>
    <ligand>
        <name>heme</name>
        <dbReference type="ChEBI" id="CHEBI:30413"/>
    </ligand>
</feature>
<feature type="binding site" description="axial binding residue" evidence="2">
    <location>
        <position position="60"/>
    </location>
    <ligand>
        <name>heme</name>
        <dbReference type="ChEBI" id="CHEBI:30413"/>
    </ligand>
    <ligandPart>
        <name>Fe</name>
        <dbReference type="ChEBI" id="CHEBI:18248"/>
    </ligandPart>
</feature>
<accession>A4GYS4</accession>
<comment type="function">
    <text evidence="2">Component of the cytochrome b6-f complex, which mediates electron transfer between photosystem II (PSII) and photosystem I (PSI), cyclic electron flow around PSI, and state transitions.</text>
</comment>
<comment type="cofactor">
    <cofactor evidence="2">
        <name>heme</name>
        <dbReference type="ChEBI" id="CHEBI:30413"/>
    </cofactor>
    <text evidence="2">Binds 1 heme group covalently.</text>
</comment>
<comment type="subunit">
    <text evidence="1">The 4 large subunits of the cytochrome b6-f complex are cytochrome b6, subunit IV (17 kDa polypeptide, petD), cytochrome f and the Rieske protein, while the 4 small subunits are PetG, PetL, PetM and PetN. The complex functions as a dimer (By similarity).</text>
</comment>
<comment type="subcellular location">
    <subcellularLocation>
        <location evidence="2">Plastid</location>
        <location evidence="2">Chloroplast thylakoid membrane</location>
        <topology evidence="2">Single-pass membrane protein</topology>
    </subcellularLocation>
</comment>
<comment type="similarity">
    <text evidence="2">Belongs to the cytochrome f family.</text>
</comment>
<gene>
    <name evidence="2" type="primary">petA</name>
    <name type="ordered locus">Poptr_cp036</name>
</gene>